<dbReference type="EC" id="3.1.11.6" evidence="1"/>
<dbReference type="EMBL" id="CP001407">
    <property type="protein sequence ID" value="ACO29954.1"/>
    <property type="molecule type" value="Genomic_DNA"/>
</dbReference>
<dbReference type="RefSeq" id="WP_000428423.1">
    <property type="nucleotide sequence ID" value="NZ_CP009318.1"/>
</dbReference>
<dbReference type="SMR" id="C1ERQ2"/>
<dbReference type="GeneID" id="93006923"/>
<dbReference type="KEGG" id="bcx:BCA_4288"/>
<dbReference type="PATRIC" id="fig|572264.18.peg.4239"/>
<dbReference type="Proteomes" id="UP000002210">
    <property type="component" value="Chromosome"/>
</dbReference>
<dbReference type="GO" id="GO:0005829">
    <property type="term" value="C:cytosol"/>
    <property type="evidence" value="ECO:0007669"/>
    <property type="project" value="TreeGrafter"/>
</dbReference>
<dbReference type="GO" id="GO:0009318">
    <property type="term" value="C:exodeoxyribonuclease VII complex"/>
    <property type="evidence" value="ECO:0007669"/>
    <property type="project" value="InterPro"/>
</dbReference>
<dbReference type="GO" id="GO:0008855">
    <property type="term" value="F:exodeoxyribonuclease VII activity"/>
    <property type="evidence" value="ECO:0007669"/>
    <property type="project" value="UniProtKB-UniRule"/>
</dbReference>
<dbReference type="GO" id="GO:0006308">
    <property type="term" value="P:DNA catabolic process"/>
    <property type="evidence" value="ECO:0007669"/>
    <property type="project" value="UniProtKB-UniRule"/>
</dbReference>
<dbReference type="FunFam" id="1.10.287.1040:FF:000002">
    <property type="entry name" value="Exodeoxyribonuclease 7 small subunit"/>
    <property type="match status" value="1"/>
</dbReference>
<dbReference type="Gene3D" id="1.10.287.1040">
    <property type="entry name" value="Exonuclease VII, small subunit"/>
    <property type="match status" value="1"/>
</dbReference>
<dbReference type="HAMAP" id="MF_00337">
    <property type="entry name" value="Exonuc_7_S"/>
    <property type="match status" value="1"/>
</dbReference>
<dbReference type="InterPro" id="IPR003761">
    <property type="entry name" value="Exonuc_VII_S"/>
</dbReference>
<dbReference type="InterPro" id="IPR037004">
    <property type="entry name" value="Exonuc_VII_ssu_sf"/>
</dbReference>
<dbReference type="NCBIfam" id="NF010666">
    <property type="entry name" value="PRK14063.1"/>
    <property type="match status" value="1"/>
</dbReference>
<dbReference type="NCBIfam" id="TIGR01280">
    <property type="entry name" value="xseB"/>
    <property type="match status" value="1"/>
</dbReference>
<dbReference type="PANTHER" id="PTHR34137">
    <property type="entry name" value="EXODEOXYRIBONUCLEASE 7 SMALL SUBUNIT"/>
    <property type="match status" value="1"/>
</dbReference>
<dbReference type="PANTHER" id="PTHR34137:SF1">
    <property type="entry name" value="EXODEOXYRIBONUCLEASE 7 SMALL SUBUNIT"/>
    <property type="match status" value="1"/>
</dbReference>
<dbReference type="Pfam" id="PF02609">
    <property type="entry name" value="Exonuc_VII_S"/>
    <property type="match status" value="1"/>
</dbReference>
<dbReference type="PIRSF" id="PIRSF006488">
    <property type="entry name" value="Exonuc_VII_S"/>
    <property type="match status" value="1"/>
</dbReference>
<dbReference type="SUPFAM" id="SSF116842">
    <property type="entry name" value="XseB-like"/>
    <property type="match status" value="1"/>
</dbReference>
<sequence>MENKLSFEEAISQLEHLVSKLEQGDVPLEEAISYFKEGMELSKLCDEKLKNVQEQMAVILGEDGELEPFTALGDEA</sequence>
<evidence type="ECO:0000255" key="1">
    <source>
        <dbReference type="HAMAP-Rule" id="MF_00337"/>
    </source>
</evidence>
<organism>
    <name type="scientific">Bacillus cereus (strain 03BB102)</name>
    <dbReference type="NCBI Taxonomy" id="572264"/>
    <lineage>
        <taxon>Bacteria</taxon>
        <taxon>Bacillati</taxon>
        <taxon>Bacillota</taxon>
        <taxon>Bacilli</taxon>
        <taxon>Bacillales</taxon>
        <taxon>Bacillaceae</taxon>
        <taxon>Bacillus</taxon>
        <taxon>Bacillus cereus group</taxon>
    </lineage>
</organism>
<protein>
    <recommendedName>
        <fullName evidence="1">Exodeoxyribonuclease 7 small subunit</fullName>
        <ecNumber evidence="1">3.1.11.6</ecNumber>
    </recommendedName>
    <alternativeName>
        <fullName evidence="1">Exodeoxyribonuclease VII small subunit</fullName>
        <shortName evidence="1">Exonuclease VII small subunit</shortName>
    </alternativeName>
</protein>
<proteinExistence type="inferred from homology"/>
<name>EX7S_BACC3</name>
<keyword id="KW-0963">Cytoplasm</keyword>
<keyword id="KW-0269">Exonuclease</keyword>
<keyword id="KW-0378">Hydrolase</keyword>
<keyword id="KW-0540">Nuclease</keyword>
<gene>
    <name evidence="1" type="primary">xseB</name>
    <name type="ordered locus">BCA_4288</name>
</gene>
<accession>C1ERQ2</accession>
<comment type="function">
    <text evidence="1">Bidirectionally degrades single-stranded DNA into large acid-insoluble oligonucleotides, which are then degraded further into small acid-soluble oligonucleotides.</text>
</comment>
<comment type="catalytic activity">
    <reaction evidence="1">
        <text>Exonucleolytic cleavage in either 5'- to 3'- or 3'- to 5'-direction to yield nucleoside 5'-phosphates.</text>
        <dbReference type="EC" id="3.1.11.6"/>
    </reaction>
</comment>
<comment type="subunit">
    <text evidence="1">Heterooligomer composed of large and small subunits.</text>
</comment>
<comment type="subcellular location">
    <subcellularLocation>
        <location evidence="1">Cytoplasm</location>
    </subcellularLocation>
</comment>
<comment type="similarity">
    <text evidence="1">Belongs to the XseB family.</text>
</comment>
<feature type="chain" id="PRO_1000200243" description="Exodeoxyribonuclease 7 small subunit">
    <location>
        <begin position="1"/>
        <end position="76"/>
    </location>
</feature>
<reference key="1">
    <citation type="submission" date="2009-02" db="EMBL/GenBank/DDBJ databases">
        <title>Genome sequence of Bacillus cereus 03BB102.</title>
        <authorList>
            <person name="Dodson R.J."/>
            <person name="Jackson P."/>
            <person name="Munk A.C."/>
            <person name="Brettin T."/>
            <person name="Bruce D."/>
            <person name="Detter C."/>
            <person name="Tapia R."/>
            <person name="Han C."/>
            <person name="Sutton G."/>
            <person name="Sims D."/>
        </authorList>
    </citation>
    <scope>NUCLEOTIDE SEQUENCE [LARGE SCALE GENOMIC DNA]</scope>
    <source>
        <strain>03BB102</strain>
    </source>
</reference>